<evidence type="ECO:0000255" key="1">
    <source>
        <dbReference type="HAMAP-Rule" id="MF_00686"/>
    </source>
</evidence>
<accession>A3M1D8</accession>
<proteinExistence type="inferred from homology"/>
<protein>
    <recommendedName>
        <fullName evidence="1">Probable Fe(2+)-trafficking protein</fullName>
    </recommendedName>
</protein>
<reference key="1">
    <citation type="journal article" date="2007" name="Genes Dev.">
        <title>New insights into Acinetobacter baumannii pathogenesis revealed by high-density pyrosequencing and transposon mutagenesis.</title>
        <authorList>
            <person name="Smith M.G."/>
            <person name="Gianoulis T.A."/>
            <person name="Pukatzki S."/>
            <person name="Mekalanos J.J."/>
            <person name="Ornston L.N."/>
            <person name="Gerstein M."/>
            <person name="Snyder M."/>
        </authorList>
    </citation>
    <scope>NUCLEOTIDE SEQUENCE [LARGE SCALE GENOMIC DNA]</scope>
    <source>
        <strain>ATCC 17978 / DSM 105126 / CIP 53.77 / LMG 1025 / NCDC KC755 / 5377</strain>
    </source>
</reference>
<comment type="function">
    <text evidence="1">Could be a mediator in iron transactions between iron acquisition and iron-requiring processes, such as synthesis and/or repair of Fe-S clusters in biosynthetic enzymes.</text>
</comment>
<comment type="similarity">
    <text evidence="1">Belongs to the Fe(2+)-trafficking protein family.</text>
</comment>
<organism>
    <name type="scientific">Acinetobacter baumannii (strain ATCC 17978 / DSM 105126 / CIP 53.77 / LMG 1025 / NCDC KC755 / 5377)</name>
    <dbReference type="NCBI Taxonomy" id="400667"/>
    <lineage>
        <taxon>Bacteria</taxon>
        <taxon>Pseudomonadati</taxon>
        <taxon>Pseudomonadota</taxon>
        <taxon>Gammaproteobacteria</taxon>
        <taxon>Moraxellales</taxon>
        <taxon>Moraxellaceae</taxon>
        <taxon>Acinetobacter</taxon>
        <taxon>Acinetobacter calcoaceticus/baumannii complex</taxon>
    </lineage>
</organism>
<gene>
    <name type="ordered locus">A1S_0257</name>
</gene>
<feature type="chain" id="PRO_1000131819" description="Probable Fe(2+)-trafficking protein">
    <location>
        <begin position="1"/>
        <end position="89"/>
    </location>
</feature>
<sequence>MSRQVFCRKYQKEMEGLDFAPFPGAKGQEFFENVSKQAWQEWLQHQTTLINEKRLNVFEPEAKKFLEEQREKFFNNDESVEKAEGWKPE</sequence>
<dbReference type="EMBL" id="CP000521">
    <property type="protein sequence ID" value="ABO10732.2"/>
    <property type="molecule type" value="Genomic_DNA"/>
</dbReference>
<dbReference type="RefSeq" id="WP_000089996.1">
    <property type="nucleotide sequence ID" value="NZ_CP053098.1"/>
</dbReference>
<dbReference type="SMR" id="A3M1D8"/>
<dbReference type="KEGG" id="acb:A1S_0257"/>
<dbReference type="HOGENOM" id="CLU_170994_0_0_6"/>
<dbReference type="GO" id="GO:0005829">
    <property type="term" value="C:cytosol"/>
    <property type="evidence" value="ECO:0007669"/>
    <property type="project" value="TreeGrafter"/>
</dbReference>
<dbReference type="GO" id="GO:0005506">
    <property type="term" value="F:iron ion binding"/>
    <property type="evidence" value="ECO:0007669"/>
    <property type="project" value="UniProtKB-UniRule"/>
</dbReference>
<dbReference type="GO" id="GO:0034599">
    <property type="term" value="P:cellular response to oxidative stress"/>
    <property type="evidence" value="ECO:0007669"/>
    <property type="project" value="TreeGrafter"/>
</dbReference>
<dbReference type="Gene3D" id="1.10.3880.10">
    <property type="entry name" value="Fe(II) trafficking protein YggX"/>
    <property type="match status" value="1"/>
</dbReference>
<dbReference type="HAMAP" id="MF_00686">
    <property type="entry name" value="Fe_traffic_YggX"/>
    <property type="match status" value="1"/>
</dbReference>
<dbReference type="InterPro" id="IPR007457">
    <property type="entry name" value="Fe_traffick_prot_YggX"/>
</dbReference>
<dbReference type="InterPro" id="IPR036766">
    <property type="entry name" value="Fe_traffick_prot_YggX_sf"/>
</dbReference>
<dbReference type="NCBIfam" id="NF003817">
    <property type="entry name" value="PRK05408.1"/>
    <property type="match status" value="1"/>
</dbReference>
<dbReference type="PANTHER" id="PTHR36965">
    <property type="entry name" value="FE(2+)-TRAFFICKING PROTEIN-RELATED"/>
    <property type="match status" value="1"/>
</dbReference>
<dbReference type="PANTHER" id="PTHR36965:SF1">
    <property type="entry name" value="FE(2+)-TRAFFICKING PROTEIN-RELATED"/>
    <property type="match status" value="1"/>
</dbReference>
<dbReference type="Pfam" id="PF04362">
    <property type="entry name" value="Iron_traffic"/>
    <property type="match status" value="1"/>
</dbReference>
<dbReference type="PIRSF" id="PIRSF029827">
    <property type="entry name" value="Fe_traffic_YggX"/>
    <property type="match status" value="1"/>
</dbReference>
<dbReference type="SUPFAM" id="SSF111148">
    <property type="entry name" value="YggX-like"/>
    <property type="match status" value="1"/>
</dbReference>
<name>FETP_ACIBT</name>
<keyword id="KW-0408">Iron</keyword>